<comment type="function">
    <text evidence="1">Catalyzes the anti-1,4-elimination of the C-3 phosphate and the C-6 proR hydrogen from 5-enolpyruvylshikimate-3-phosphate (EPSP) to yield chorismate, which is the branch point compound that serves as the starting substrate for the three terminal pathways of aromatic amino acid biosynthesis. This reaction introduces a second double bond into the aromatic ring system.</text>
</comment>
<comment type="catalytic activity">
    <reaction evidence="1">
        <text>5-O-(1-carboxyvinyl)-3-phosphoshikimate = chorismate + phosphate</text>
        <dbReference type="Rhea" id="RHEA:21020"/>
        <dbReference type="ChEBI" id="CHEBI:29748"/>
        <dbReference type="ChEBI" id="CHEBI:43474"/>
        <dbReference type="ChEBI" id="CHEBI:57701"/>
        <dbReference type="EC" id="4.2.3.5"/>
    </reaction>
</comment>
<comment type="cofactor">
    <cofactor evidence="1">
        <name>FMNH2</name>
        <dbReference type="ChEBI" id="CHEBI:57618"/>
    </cofactor>
    <text evidence="1">Reduced FMN (FMNH(2)).</text>
</comment>
<comment type="pathway">
    <text evidence="1">Metabolic intermediate biosynthesis; chorismate biosynthesis; chorismate from D-erythrose 4-phosphate and phosphoenolpyruvate: step 7/7.</text>
</comment>
<comment type="subunit">
    <text evidence="1">Homotetramer.</text>
</comment>
<comment type="similarity">
    <text evidence="1">Belongs to the chorismate synthase family.</text>
</comment>
<reference key="1">
    <citation type="journal article" date="2004" name="Science">
        <title>A predator unmasked: life cycle of Bdellovibrio bacteriovorus from a genomic perspective.</title>
        <authorList>
            <person name="Rendulic S."/>
            <person name="Jagtap P."/>
            <person name="Rosinus A."/>
            <person name="Eppinger M."/>
            <person name="Baar C."/>
            <person name="Lanz C."/>
            <person name="Keller H."/>
            <person name="Lambert C."/>
            <person name="Evans K.J."/>
            <person name="Goesmann A."/>
            <person name="Meyer F."/>
            <person name="Sockett R.E."/>
            <person name="Schuster S.C."/>
        </authorList>
    </citation>
    <scope>NUCLEOTIDE SEQUENCE [LARGE SCALE GENOMIC DNA]</scope>
    <source>
        <strain>ATCC 15356 / DSM 50701 / NCIMB 9529 / HD100</strain>
    </source>
</reference>
<organism>
    <name type="scientific">Bdellovibrio bacteriovorus (strain ATCC 15356 / DSM 50701 / NCIMB 9529 / HD100)</name>
    <dbReference type="NCBI Taxonomy" id="264462"/>
    <lineage>
        <taxon>Bacteria</taxon>
        <taxon>Pseudomonadati</taxon>
        <taxon>Bdellovibrionota</taxon>
        <taxon>Bdellovibrionia</taxon>
        <taxon>Bdellovibrionales</taxon>
        <taxon>Pseudobdellovibrionaceae</taxon>
        <taxon>Bdellovibrio</taxon>
    </lineage>
</organism>
<gene>
    <name evidence="1" type="primary">aroC</name>
    <name type="ordered locus">Bd3493</name>
</gene>
<name>AROC_BDEBA</name>
<accession>Q6MHP7</accession>
<keyword id="KW-0028">Amino-acid biosynthesis</keyword>
<keyword id="KW-0057">Aromatic amino acid biosynthesis</keyword>
<keyword id="KW-0274">FAD</keyword>
<keyword id="KW-0285">Flavoprotein</keyword>
<keyword id="KW-0288">FMN</keyword>
<keyword id="KW-0456">Lyase</keyword>
<keyword id="KW-0521">NADP</keyword>
<keyword id="KW-1185">Reference proteome</keyword>
<evidence type="ECO:0000255" key="1">
    <source>
        <dbReference type="HAMAP-Rule" id="MF_00300"/>
    </source>
</evidence>
<evidence type="ECO:0000256" key="2">
    <source>
        <dbReference type="SAM" id="MobiDB-lite"/>
    </source>
</evidence>
<sequence length="341" mass="36702">MSASQFGSRFVITTFGESHGTALGVVIDGCPAGVNFDEGLLKKELERRRPGHHGSGQIVSGRQETDAPEVLSGVFDGKTLGTPMAIIVRNQDARSQDYSVIKNSPRAGHADDMWRNKFGHSDHRGGGRSSGRETVSRVMAGSVAQMMMKHVSAPTKVIGYASQIGPMTLTDAERAEVSKKDIDSFQARFPSSRDQEVADLLKKAQDNGESHGGVAEILIQNPPAHLGQPVFHKLKSDLAMAFLSVGATNGFELGLGFEAAEVKGTQFHQGPQDAYGGIRGGISTGESILLRVSFKPTSSILDVAKKGRHDPCIVTRAIPVLEAMTWLVLADHYLWSKTDRI</sequence>
<feature type="chain" id="PRO_0000405965" description="Chorismate synthase">
    <location>
        <begin position="1"/>
        <end position="341"/>
    </location>
</feature>
<feature type="region of interest" description="Disordered" evidence="2">
    <location>
        <begin position="45"/>
        <end position="64"/>
    </location>
</feature>
<feature type="region of interest" description="Disordered" evidence="2">
    <location>
        <begin position="109"/>
        <end position="134"/>
    </location>
</feature>
<feature type="binding site" evidence="1">
    <location>
        <position position="48"/>
    </location>
    <ligand>
        <name>NADP(+)</name>
        <dbReference type="ChEBI" id="CHEBI:58349"/>
    </ligand>
</feature>
<feature type="binding site" evidence="1">
    <location>
        <begin position="128"/>
        <end position="130"/>
    </location>
    <ligand>
        <name>FMN</name>
        <dbReference type="ChEBI" id="CHEBI:58210"/>
    </ligand>
</feature>
<feature type="binding site" evidence="1">
    <location>
        <position position="280"/>
    </location>
    <ligand>
        <name>FMN</name>
        <dbReference type="ChEBI" id="CHEBI:58210"/>
    </ligand>
</feature>
<feature type="binding site" evidence="1">
    <location>
        <begin position="295"/>
        <end position="299"/>
    </location>
    <ligand>
        <name>FMN</name>
        <dbReference type="ChEBI" id="CHEBI:58210"/>
    </ligand>
</feature>
<feature type="binding site" evidence="1">
    <location>
        <position position="308"/>
    </location>
    <ligand>
        <name>FMN</name>
        <dbReference type="ChEBI" id="CHEBI:58210"/>
    </ligand>
</feature>
<dbReference type="EC" id="4.2.3.5" evidence="1"/>
<dbReference type="EMBL" id="BX842655">
    <property type="protein sequence ID" value="CAE78285.1"/>
    <property type="molecule type" value="Genomic_DNA"/>
</dbReference>
<dbReference type="RefSeq" id="WP_011165823.1">
    <property type="nucleotide sequence ID" value="NC_005363.1"/>
</dbReference>
<dbReference type="SMR" id="Q6MHP7"/>
<dbReference type="STRING" id="264462.Bd3493"/>
<dbReference type="GeneID" id="93014301"/>
<dbReference type="KEGG" id="bba:Bd3493"/>
<dbReference type="eggNOG" id="COG0082">
    <property type="taxonomic scope" value="Bacteria"/>
</dbReference>
<dbReference type="HOGENOM" id="CLU_034547_0_0_7"/>
<dbReference type="UniPathway" id="UPA00053">
    <property type="reaction ID" value="UER00090"/>
</dbReference>
<dbReference type="Proteomes" id="UP000008080">
    <property type="component" value="Chromosome"/>
</dbReference>
<dbReference type="GO" id="GO:0005829">
    <property type="term" value="C:cytosol"/>
    <property type="evidence" value="ECO:0007669"/>
    <property type="project" value="TreeGrafter"/>
</dbReference>
<dbReference type="GO" id="GO:0004107">
    <property type="term" value="F:chorismate synthase activity"/>
    <property type="evidence" value="ECO:0007669"/>
    <property type="project" value="UniProtKB-UniRule"/>
</dbReference>
<dbReference type="GO" id="GO:0010181">
    <property type="term" value="F:FMN binding"/>
    <property type="evidence" value="ECO:0007669"/>
    <property type="project" value="TreeGrafter"/>
</dbReference>
<dbReference type="GO" id="GO:0008652">
    <property type="term" value="P:amino acid biosynthetic process"/>
    <property type="evidence" value="ECO:0007669"/>
    <property type="project" value="UniProtKB-KW"/>
</dbReference>
<dbReference type="GO" id="GO:0009073">
    <property type="term" value="P:aromatic amino acid family biosynthetic process"/>
    <property type="evidence" value="ECO:0007669"/>
    <property type="project" value="UniProtKB-KW"/>
</dbReference>
<dbReference type="GO" id="GO:0009423">
    <property type="term" value="P:chorismate biosynthetic process"/>
    <property type="evidence" value="ECO:0007669"/>
    <property type="project" value="UniProtKB-UniRule"/>
</dbReference>
<dbReference type="CDD" id="cd07304">
    <property type="entry name" value="Chorismate_synthase"/>
    <property type="match status" value="1"/>
</dbReference>
<dbReference type="Gene3D" id="3.60.150.10">
    <property type="entry name" value="Chorismate synthase AroC"/>
    <property type="match status" value="1"/>
</dbReference>
<dbReference type="HAMAP" id="MF_00300">
    <property type="entry name" value="Chorismate_synth"/>
    <property type="match status" value="1"/>
</dbReference>
<dbReference type="InterPro" id="IPR000453">
    <property type="entry name" value="Chorismate_synth"/>
</dbReference>
<dbReference type="InterPro" id="IPR035904">
    <property type="entry name" value="Chorismate_synth_AroC_sf"/>
</dbReference>
<dbReference type="InterPro" id="IPR020541">
    <property type="entry name" value="Chorismate_synthase_CS"/>
</dbReference>
<dbReference type="NCBIfam" id="TIGR00033">
    <property type="entry name" value="aroC"/>
    <property type="match status" value="1"/>
</dbReference>
<dbReference type="NCBIfam" id="NF003793">
    <property type="entry name" value="PRK05382.1"/>
    <property type="match status" value="1"/>
</dbReference>
<dbReference type="PANTHER" id="PTHR21085">
    <property type="entry name" value="CHORISMATE SYNTHASE"/>
    <property type="match status" value="1"/>
</dbReference>
<dbReference type="PANTHER" id="PTHR21085:SF0">
    <property type="entry name" value="CHORISMATE SYNTHASE"/>
    <property type="match status" value="1"/>
</dbReference>
<dbReference type="Pfam" id="PF01264">
    <property type="entry name" value="Chorismate_synt"/>
    <property type="match status" value="1"/>
</dbReference>
<dbReference type="PIRSF" id="PIRSF001456">
    <property type="entry name" value="Chorismate_synth"/>
    <property type="match status" value="1"/>
</dbReference>
<dbReference type="SUPFAM" id="SSF103263">
    <property type="entry name" value="Chorismate synthase, AroC"/>
    <property type="match status" value="1"/>
</dbReference>
<dbReference type="PROSITE" id="PS00787">
    <property type="entry name" value="CHORISMATE_SYNTHASE_1"/>
    <property type="match status" value="1"/>
</dbReference>
<dbReference type="PROSITE" id="PS00788">
    <property type="entry name" value="CHORISMATE_SYNTHASE_2"/>
    <property type="match status" value="1"/>
</dbReference>
<dbReference type="PROSITE" id="PS00789">
    <property type="entry name" value="CHORISMATE_SYNTHASE_3"/>
    <property type="match status" value="1"/>
</dbReference>
<proteinExistence type="inferred from homology"/>
<protein>
    <recommendedName>
        <fullName evidence="1">Chorismate synthase</fullName>
        <shortName evidence="1">CS</shortName>
        <ecNumber evidence="1">4.2.3.5</ecNumber>
    </recommendedName>
    <alternativeName>
        <fullName evidence="1">5-enolpyruvylshikimate-3-phosphate phospholyase</fullName>
    </alternativeName>
</protein>